<reference key="1">
    <citation type="journal article" date="2001" name="Nature">
        <title>Complete genome sequence of Salmonella enterica serovar Typhimurium LT2.</title>
        <authorList>
            <person name="McClelland M."/>
            <person name="Sanderson K.E."/>
            <person name="Spieth J."/>
            <person name="Clifton S.W."/>
            <person name="Latreille P."/>
            <person name="Courtney L."/>
            <person name="Porwollik S."/>
            <person name="Ali J."/>
            <person name="Dante M."/>
            <person name="Du F."/>
            <person name="Hou S."/>
            <person name="Layman D."/>
            <person name="Leonard S."/>
            <person name="Nguyen C."/>
            <person name="Scott K."/>
            <person name="Holmes A."/>
            <person name="Grewal N."/>
            <person name="Mulvaney E."/>
            <person name="Ryan E."/>
            <person name="Sun H."/>
            <person name="Florea L."/>
            <person name="Miller W."/>
            <person name="Stoneking T."/>
            <person name="Nhan M."/>
            <person name="Waterston R."/>
            <person name="Wilson R.K."/>
        </authorList>
    </citation>
    <scope>NUCLEOTIDE SEQUENCE [LARGE SCALE GENOMIC DNA]</scope>
    <source>
        <strain>LT2 / SGSC1412 / ATCC 700720</strain>
    </source>
</reference>
<reference key="2">
    <citation type="journal article" date="2003" name="Mol. Microbiol.">
        <title>Unravelling the biology of macrophage infection by gene expression profiling of intracellular Salmonella enterica.</title>
        <authorList>
            <person name="Eriksson S."/>
            <person name="Lucchini S."/>
            <person name="Thompson A."/>
            <person name="Rhen M."/>
            <person name="Hinton J.C."/>
        </authorList>
    </citation>
    <scope>INDUCTION</scope>
</reference>
<reference key="3">
    <citation type="journal article" date="2006" name="J. Biol. Chem.">
        <title>Proteomic analysis of Salmonella enterica serovar typhimurium isolated from RAW 264.7 macrophages: identification of a novel protein that contributes to the replication of serovar typhimurium inside macrophages.</title>
        <authorList>
            <person name="Shi L."/>
            <person name="Adkins J.N."/>
            <person name="Coleman J.R."/>
            <person name="Schepmoes A.A."/>
            <person name="Dohnkova A."/>
            <person name="Mottaz H.M."/>
            <person name="Norbeck A.D."/>
            <person name="Purvine S.O."/>
            <person name="Manes N.P."/>
            <person name="Smallwood H.S."/>
            <person name="Wang H."/>
            <person name="Forbes J."/>
            <person name="Gros P."/>
            <person name="Uzzau S."/>
            <person name="Rodland K.D."/>
            <person name="Heffron F."/>
            <person name="Smith R.D."/>
            <person name="Squier T.C."/>
        </authorList>
    </citation>
    <scope>IDENTIFICATION BY MASS SPECTROMETRY</scope>
    <scope>FUNCTION</scope>
    <scope>INDUCTION</scope>
    <source>
        <strain>ATCC 14028 / SGSG 2980 / CDC 6516-60 / NCTC 12023</strain>
    </source>
</reference>
<name>VIR17_SALTY</name>
<comment type="function">
    <text evidence="3">Is critically involved in promoting the replication of S.typhimurium cells inside host macrophages, suggesting a role in the establishment of bacterial colonization within macrophages. May be involved in the biosynthesis and modification of the peptidoglycan layer of the cell wall.</text>
</comment>
<comment type="induction">
    <text evidence="2 3">Up-regulated following infection of host macrophages.</text>
</comment>
<feature type="chain" id="PRO_0000272960" description="Virulence protein STM3117">
    <location>
        <begin position="1"/>
        <end position="144"/>
    </location>
</feature>
<feature type="domain" description="VOC" evidence="1">
    <location>
        <begin position="23"/>
        <end position="143"/>
    </location>
</feature>
<feature type="strand" evidence="5">
    <location>
        <begin position="21"/>
        <end position="32"/>
    </location>
</feature>
<feature type="helix" evidence="5">
    <location>
        <begin position="34"/>
        <end position="43"/>
    </location>
</feature>
<feature type="strand" evidence="5">
    <location>
        <begin position="48"/>
        <end position="52"/>
    </location>
</feature>
<feature type="turn" evidence="5">
    <location>
        <begin position="53"/>
        <end position="55"/>
    </location>
</feature>
<feature type="strand" evidence="5">
    <location>
        <begin position="56"/>
        <end position="61"/>
    </location>
</feature>
<feature type="strand" evidence="5">
    <location>
        <begin position="64"/>
        <end position="70"/>
    </location>
</feature>
<feature type="strand" evidence="4">
    <location>
        <begin position="75"/>
        <end position="77"/>
    </location>
</feature>
<feature type="strand" evidence="5">
    <location>
        <begin position="88"/>
        <end position="95"/>
    </location>
</feature>
<feature type="helix" evidence="5">
    <location>
        <begin position="97"/>
        <end position="106"/>
    </location>
</feature>
<feature type="strand" evidence="5">
    <location>
        <begin position="112"/>
        <end position="120"/>
    </location>
</feature>
<feature type="strand" evidence="5">
    <location>
        <begin position="123"/>
        <end position="131"/>
    </location>
</feature>
<feature type="strand" evidence="5">
    <location>
        <begin position="137"/>
        <end position="142"/>
    </location>
</feature>
<evidence type="ECO:0000255" key="1">
    <source>
        <dbReference type="PROSITE-ProRule" id="PRU01163"/>
    </source>
</evidence>
<evidence type="ECO:0000269" key="2">
    <source>
    </source>
</evidence>
<evidence type="ECO:0000269" key="3">
    <source>
    </source>
</evidence>
<evidence type="ECO:0007829" key="4">
    <source>
        <dbReference type="PDB" id="3HNQ"/>
    </source>
</evidence>
<evidence type="ECO:0007829" key="5">
    <source>
        <dbReference type="PDB" id="3HUH"/>
    </source>
</evidence>
<protein>
    <recommendedName>
        <fullName>Virulence protein STM3117</fullName>
    </recommendedName>
</protein>
<keyword id="KW-0002">3D-structure</keyword>
<keyword id="KW-1185">Reference proteome</keyword>
<keyword id="KW-0843">Virulence</keyword>
<accession>Q8ZM36</accession>
<gene>
    <name type="ordered locus">STM3117</name>
</gene>
<proteinExistence type="evidence at protein level"/>
<organism>
    <name type="scientific">Salmonella typhimurium (strain LT2 / SGSC1412 / ATCC 700720)</name>
    <dbReference type="NCBI Taxonomy" id="99287"/>
    <lineage>
        <taxon>Bacteria</taxon>
        <taxon>Pseudomonadati</taxon>
        <taxon>Pseudomonadota</taxon>
        <taxon>Gammaproteobacteria</taxon>
        <taxon>Enterobacterales</taxon>
        <taxon>Enterobacteriaceae</taxon>
        <taxon>Salmonella</taxon>
    </lineage>
</organism>
<sequence>MLFFNVASLKYKHHESIQMIIDRIDHLVLTVSDISTTIRFYEEVLGFSAVTFKQNRKALIFGAQKINLHQQEMEFEPKASRPTPGSADLCFITSTPINDVVSEILQAGISIVEGPVERTGATGEIMSIYIRDPDGNLIEISQYV</sequence>
<dbReference type="EMBL" id="AE006468">
    <property type="protein sequence ID" value="AAL21991.1"/>
    <property type="molecule type" value="Genomic_DNA"/>
</dbReference>
<dbReference type="RefSeq" id="NP_462032.1">
    <property type="nucleotide sequence ID" value="NC_003197.2"/>
</dbReference>
<dbReference type="RefSeq" id="WP_001673714.1">
    <property type="nucleotide sequence ID" value="NC_003197.2"/>
</dbReference>
<dbReference type="PDB" id="3HNQ">
    <property type="method" value="X-ray"/>
    <property type="resolution" value="2.10 A"/>
    <property type="chains" value="A/B/C/D=1-144"/>
</dbReference>
<dbReference type="PDB" id="3HUH">
    <property type="method" value="X-ray"/>
    <property type="resolution" value="1.50 A"/>
    <property type="chains" value="A/B/C/D=4-144"/>
</dbReference>
<dbReference type="PDBsum" id="3HNQ"/>
<dbReference type="PDBsum" id="3HUH"/>
<dbReference type="SMR" id="Q8ZM36"/>
<dbReference type="STRING" id="99287.STM3117"/>
<dbReference type="PaxDb" id="99287-STM3117"/>
<dbReference type="DNASU" id="1254640"/>
<dbReference type="GeneID" id="1254640"/>
<dbReference type="KEGG" id="stm:STM3117"/>
<dbReference type="HOGENOM" id="CLU_046006_4_3_6"/>
<dbReference type="OMA" id="FGTHKIN"/>
<dbReference type="PhylomeDB" id="Q8ZM36"/>
<dbReference type="BioCyc" id="SENT99287:STM3117-MONOMER"/>
<dbReference type="BRENDA" id="4.4.1.5">
    <property type="organism ID" value="5542"/>
</dbReference>
<dbReference type="EvolutionaryTrace" id="Q8ZM36"/>
<dbReference type="Proteomes" id="UP000001014">
    <property type="component" value="Chromosome"/>
</dbReference>
<dbReference type="CDD" id="cd07253">
    <property type="entry name" value="GLOD5"/>
    <property type="match status" value="1"/>
</dbReference>
<dbReference type="Gene3D" id="3.10.180.10">
    <property type="entry name" value="2,3-Dihydroxybiphenyl 1,2-Dioxygenase, domain 1"/>
    <property type="match status" value="1"/>
</dbReference>
<dbReference type="InterPro" id="IPR029068">
    <property type="entry name" value="Glyas_Bleomycin-R_OHBP_Dase"/>
</dbReference>
<dbReference type="InterPro" id="IPR004360">
    <property type="entry name" value="Glyas_Fos-R_dOase_dom"/>
</dbReference>
<dbReference type="InterPro" id="IPR050383">
    <property type="entry name" value="GlyoxalaseI/FosfomycinResist"/>
</dbReference>
<dbReference type="InterPro" id="IPR037523">
    <property type="entry name" value="VOC"/>
</dbReference>
<dbReference type="PANTHER" id="PTHR21366:SF14">
    <property type="entry name" value="GLYOXALASE DOMAIN-CONTAINING PROTEIN 5"/>
    <property type="match status" value="1"/>
</dbReference>
<dbReference type="PANTHER" id="PTHR21366">
    <property type="entry name" value="GLYOXALASE FAMILY PROTEIN"/>
    <property type="match status" value="1"/>
</dbReference>
<dbReference type="Pfam" id="PF00903">
    <property type="entry name" value="Glyoxalase"/>
    <property type="match status" value="1"/>
</dbReference>
<dbReference type="SUPFAM" id="SSF54593">
    <property type="entry name" value="Glyoxalase/Bleomycin resistance protein/Dihydroxybiphenyl dioxygenase"/>
    <property type="match status" value="1"/>
</dbReference>
<dbReference type="PROSITE" id="PS51819">
    <property type="entry name" value="VOC"/>
    <property type="match status" value="1"/>
</dbReference>